<evidence type="ECO:0000255" key="1">
    <source>
        <dbReference type="HAMAP-Rule" id="MF_00332"/>
    </source>
</evidence>
<evidence type="ECO:0000256" key="2">
    <source>
        <dbReference type="SAM" id="MobiDB-lite"/>
    </source>
</evidence>
<comment type="function">
    <text evidence="1">Acts as a chaperone.</text>
</comment>
<comment type="induction">
    <text evidence="1">By stress conditions e.g. heat shock.</text>
</comment>
<comment type="similarity">
    <text evidence="1">Belongs to the heat shock protein 70 family.</text>
</comment>
<dbReference type="EMBL" id="BX640449">
    <property type="protein sequence ID" value="CAE34297.1"/>
    <property type="molecule type" value="Genomic_DNA"/>
</dbReference>
<dbReference type="RefSeq" id="WP_003814079.1">
    <property type="nucleotide sequence ID" value="NC_002927.3"/>
</dbReference>
<dbReference type="SMR" id="Q7WGI4"/>
<dbReference type="GeneID" id="56477581"/>
<dbReference type="KEGG" id="bbr:BB3934"/>
<dbReference type="eggNOG" id="COG0443">
    <property type="taxonomic scope" value="Bacteria"/>
</dbReference>
<dbReference type="HOGENOM" id="CLU_005965_2_1_4"/>
<dbReference type="Proteomes" id="UP000001027">
    <property type="component" value="Chromosome"/>
</dbReference>
<dbReference type="GO" id="GO:0005524">
    <property type="term" value="F:ATP binding"/>
    <property type="evidence" value="ECO:0007669"/>
    <property type="project" value="UniProtKB-UniRule"/>
</dbReference>
<dbReference type="GO" id="GO:0140662">
    <property type="term" value="F:ATP-dependent protein folding chaperone"/>
    <property type="evidence" value="ECO:0007669"/>
    <property type="project" value="InterPro"/>
</dbReference>
<dbReference type="GO" id="GO:0051082">
    <property type="term" value="F:unfolded protein binding"/>
    <property type="evidence" value="ECO:0007669"/>
    <property type="project" value="InterPro"/>
</dbReference>
<dbReference type="CDD" id="cd10234">
    <property type="entry name" value="ASKHA_NBD_HSP70_DnaK-like"/>
    <property type="match status" value="1"/>
</dbReference>
<dbReference type="FunFam" id="2.60.34.10:FF:000014">
    <property type="entry name" value="Chaperone protein DnaK HSP70"/>
    <property type="match status" value="1"/>
</dbReference>
<dbReference type="FunFam" id="3.30.30.30:FF:000003">
    <property type="entry name" value="Heat shock protein 9"/>
    <property type="match status" value="1"/>
</dbReference>
<dbReference type="FunFam" id="1.20.1270.10:FF:000001">
    <property type="entry name" value="Molecular chaperone DnaK"/>
    <property type="match status" value="1"/>
</dbReference>
<dbReference type="FunFam" id="3.30.420.40:FF:000004">
    <property type="entry name" value="Molecular chaperone DnaK"/>
    <property type="match status" value="1"/>
</dbReference>
<dbReference type="FunFam" id="3.90.640.10:FF:000003">
    <property type="entry name" value="Molecular chaperone DnaK"/>
    <property type="match status" value="1"/>
</dbReference>
<dbReference type="Gene3D" id="1.20.1270.10">
    <property type="match status" value="1"/>
</dbReference>
<dbReference type="Gene3D" id="3.30.420.40">
    <property type="match status" value="2"/>
</dbReference>
<dbReference type="Gene3D" id="3.90.640.10">
    <property type="entry name" value="Actin, Chain A, domain 4"/>
    <property type="match status" value="1"/>
</dbReference>
<dbReference type="Gene3D" id="2.60.34.10">
    <property type="entry name" value="Substrate Binding Domain Of DNAk, Chain A, domain 1"/>
    <property type="match status" value="1"/>
</dbReference>
<dbReference type="HAMAP" id="MF_00332">
    <property type="entry name" value="DnaK"/>
    <property type="match status" value="1"/>
</dbReference>
<dbReference type="InterPro" id="IPR043129">
    <property type="entry name" value="ATPase_NBD"/>
</dbReference>
<dbReference type="InterPro" id="IPR012725">
    <property type="entry name" value="Chaperone_DnaK"/>
</dbReference>
<dbReference type="InterPro" id="IPR018181">
    <property type="entry name" value="Heat_shock_70_CS"/>
</dbReference>
<dbReference type="InterPro" id="IPR029048">
    <property type="entry name" value="HSP70_C_sf"/>
</dbReference>
<dbReference type="InterPro" id="IPR029047">
    <property type="entry name" value="HSP70_peptide-bd_sf"/>
</dbReference>
<dbReference type="InterPro" id="IPR013126">
    <property type="entry name" value="Hsp_70_fam"/>
</dbReference>
<dbReference type="NCBIfam" id="NF001413">
    <property type="entry name" value="PRK00290.1"/>
    <property type="match status" value="1"/>
</dbReference>
<dbReference type="NCBIfam" id="NF003520">
    <property type="entry name" value="PRK05183.1"/>
    <property type="match status" value="1"/>
</dbReference>
<dbReference type="NCBIfam" id="TIGR02350">
    <property type="entry name" value="prok_dnaK"/>
    <property type="match status" value="1"/>
</dbReference>
<dbReference type="PANTHER" id="PTHR19375">
    <property type="entry name" value="HEAT SHOCK PROTEIN 70KDA"/>
    <property type="match status" value="1"/>
</dbReference>
<dbReference type="Pfam" id="PF00012">
    <property type="entry name" value="HSP70"/>
    <property type="match status" value="1"/>
</dbReference>
<dbReference type="PRINTS" id="PR00301">
    <property type="entry name" value="HEATSHOCK70"/>
</dbReference>
<dbReference type="SUPFAM" id="SSF53067">
    <property type="entry name" value="Actin-like ATPase domain"/>
    <property type="match status" value="2"/>
</dbReference>
<dbReference type="SUPFAM" id="SSF100934">
    <property type="entry name" value="Heat shock protein 70kD (HSP70), C-terminal subdomain"/>
    <property type="match status" value="1"/>
</dbReference>
<dbReference type="SUPFAM" id="SSF100920">
    <property type="entry name" value="Heat shock protein 70kD (HSP70), peptide-binding domain"/>
    <property type="match status" value="1"/>
</dbReference>
<dbReference type="PROSITE" id="PS00297">
    <property type="entry name" value="HSP70_1"/>
    <property type="match status" value="1"/>
</dbReference>
<dbReference type="PROSITE" id="PS00329">
    <property type="entry name" value="HSP70_2"/>
    <property type="match status" value="1"/>
</dbReference>
<dbReference type="PROSITE" id="PS01036">
    <property type="entry name" value="HSP70_3"/>
    <property type="match status" value="1"/>
</dbReference>
<feature type="chain" id="PRO_0000078424" description="Chaperone protein DnaK">
    <location>
        <begin position="1"/>
        <end position="641"/>
    </location>
</feature>
<feature type="region of interest" description="Disordered" evidence="2">
    <location>
        <begin position="606"/>
        <end position="641"/>
    </location>
</feature>
<feature type="compositionally biased region" description="Low complexity" evidence="2">
    <location>
        <begin position="608"/>
        <end position="619"/>
    </location>
</feature>
<feature type="compositionally biased region" description="Basic and acidic residues" evidence="2">
    <location>
        <begin position="632"/>
        <end position="641"/>
    </location>
</feature>
<feature type="modified residue" description="Phosphothreonine; by autocatalysis" evidence="1">
    <location>
        <position position="200"/>
    </location>
</feature>
<reference key="1">
    <citation type="journal article" date="2003" name="Nat. Genet.">
        <title>Comparative analysis of the genome sequences of Bordetella pertussis, Bordetella parapertussis and Bordetella bronchiseptica.</title>
        <authorList>
            <person name="Parkhill J."/>
            <person name="Sebaihia M."/>
            <person name="Preston A."/>
            <person name="Murphy L.D."/>
            <person name="Thomson N.R."/>
            <person name="Harris D.E."/>
            <person name="Holden M.T.G."/>
            <person name="Churcher C.M."/>
            <person name="Bentley S.D."/>
            <person name="Mungall K.L."/>
            <person name="Cerdeno-Tarraga A.-M."/>
            <person name="Temple L."/>
            <person name="James K.D."/>
            <person name="Harris B."/>
            <person name="Quail M.A."/>
            <person name="Achtman M."/>
            <person name="Atkin R."/>
            <person name="Baker S."/>
            <person name="Basham D."/>
            <person name="Bason N."/>
            <person name="Cherevach I."/>
            <person name="Chillingworth T."/>
            <person name="Collins M."/>
            <person name="Cronin A."/>
            <person name="Davis P."/>
            <person name="Doggett J."/>
            <person name="Feltwell T."/>
            <person name="Goble A."/>
            <person name="Hamlin N."/>
            <person name="Hauser H."/>
            <person name="Holroyd S."/>
            <person name="Jagels K."/>
            <person name="Leather S."/>
            <person name="Moule S."/>
            <person name="Norberczak H."/>
            <person name="O'Neil S."/>
            <person name="Ormond D."/>
            <person name="Price C."/>
            <person name="Rabbinowitsch E."/>
            <person name="Rutter S."/>
            <person name="Sanders M."/>
            <person name="Saunders D."/>
            <person name="Seeger K."/>
            <person name="Sharp S."/>
            <person name="Simmonds M."/>
            <person name="Skelton J."/>
            <person name="Squares R."/>
            <person name="Squares S."/>
            <person name="Stevens K."/>
            <person name="Unwin L."/>
            <person name="Whitehead S."/>
            <person name="Barrell B.G."/>
            <person name="Maskell D.J."/>
        </authorList>
    </citation>
    <scope>NUCLEOTIDE SEQUENCE [LARGE SCALE GENOMIC DNA]</scope>
    <source>
        <strain>ATCC BAA-588 / NCTC 13252 / RB50</strain>
    </source>
</reference>
<accession>Q7WGI4</accession>
<proteinExistence type="inferred from homology"/>
<sequence>MSKIIGIDLGTTNSCVAVLDGGQVKIIENAEGARTTPSIVAYMDDGETLVGAPAKRQAVTNPKNTLYAVKRLIGRKFDEKAVQKDIDLMPYSIVKADNGDAWVEVRGKKLAPPQVSAEVLRKMKKTAEDYLGEEVTEAVITVPAYFNDSQRQATKDAGRIAGLEVKRIINEPTAAALAFGLDKTEKGDRKIVVYDLGGGTFDVSIIEIADVDGEMQFEVLSTNGDTFLGGEDFDQRIIDYIISEFKKEQGVDLSKDVLALQRLKEAAEKAKIELSSSQQTEINLPYITADASGPKHLNLKITRAKLEALVEELIERTIEPCRVAIKDAGVKVSDIDDVILVGGMTRMPKVQDKVKEFFGREPRKDVNPDEAVAAGAAIQGSVLSGERKDVLLLDVTPLSLGIETLGGVMTKMIQKNTTIPTRYSQTFSTADDNQPAVTIKVFQGEREIAAGNKGLGEFNLEGIPPAPRGLPQIEVTFDIDANGILHVSAKDKGTGKENKITIKANSGLSEDEIQRMVKDAEANAEEDHRLAELAQARNQADALVHATRKSLTEYGEKLEAAEKESIEAAIKDLEDILKTGDKAEIDAKVEALSTASQKLGEKMYADMQAQQQAQQQQAADNAKPVDDNVVDADFKEVKRDQ</sequence>
<name>DNAK_BORBR</name>
<keyword id="KW-0067">ATP-binding</keyword>
<keyword id="KW-0143">Chaperone</keyword>
<keyword id="KW-0547">Nucleotide-binding</keyword>
<keyword id="KW-0597">Phosphoprotein</keyword>
<keyword id="KW-0346">Stress response</keyword>
<organism>
    <name type="scientific">Bordetella bronchiseptica (strain ATCC BAA-588 / NCTC 13252 / RB50)</name>
    <name type="common">Alcaligenes bronchisepticus</name>
    <dbReference type="NCBI Taxonomy" id="257310"/>
    <lineage>
        <taxon>Bacteria</taxon>
        <taxon>Pseudomonadati</taxon>
        <taxon>Pseudomonadota</taxon>
        <taxon>Betaproteobacteria</taxon>
        <taxon>Burkholderiales</taxon>
        <taxon>Alcaligenaceae</taxon>
        <taxon>Bordetella</taxon>
    </lineage>
</organism>
<protein>
    <recommendedName>
        <fullName evidence="1">Chaperone protein DnaK</fullName>
    </recommendedName>
    <alternativeName>
        <fullName evidence="1">HSP70</fullName>
    </alternativeName>
    <alternativeName>
        <fullName evidence="1">Heat shock 70 kDa protein</fullName>
    </alternativeName>
    <alternativeName>
        <fullName evidence="1">Heat shock protein 70</fullName>
    </alternativeName>
</protein>
<gene>
    <name evidence="1" type="primary">dnaK</name>
    <name type="ordered locus">BB3934</name>
</gene>